<accession>B1HY21</accession>
<feature type="chain" id="PRO_0000341771" description="2-succinyl-5-enolpyruvyl-6-hydroxy-3-cyclohexene-1-carboxylate synthase">
    <location>
        <begin position="1"/>
        <end position="571"/>
    </location>
</feature>
<sequence>MSERKNLTDYVYKMVASLVQVGVENVVVSPGSRSTPLAYAVASTKQIKMYRQVDERSAAFFALGLAKATAKPVVLLCTSGTAAANYFPAIVEASYARVPLIIITADRPHELREVGAPQTINQPHLYGSHVKWSVDFPLADGAAPTLPFIERHIARAVAIATSAPFGPVHLNVPFREPLLIDLQDELPTMTFKHSSMGQLIPTTSAMQELSSILNSTRKGFMIVGELALGTDLAFLWEFVRQLKWPVIVESLSNMRAAVPEDCLPYLVTTYDAIMKSEDFKALVQPDTVLRIGAQPVSKFIMQFITKTQPSAYVIIDEDPMFRDATGVSTHFIHANIDQWLTHLTLTNTAFEESYLAEWQKANQLASTYIEQYSEIEKDEGAMVSRLLKMIPDGSDIFVSSSMPVRDIDTFLLATPKDIRFFANRGTNGIDGVVSTALGFSQGNDRETYLLIGDLAFLHDVNGLIATRYQECNLTILVMNNDGGGIFSYLPQSTVEAHYEDLFGTPTALEFQDIAHMYNMDYVRVDTIAELSGKFSSVKKRPLRLVEIFTDRAENVQAHRELWNRINAELKA</sequence>
<reference key="1">
    <citation type="journal article" date="2008" name="J. Bacteriol.">
        <title>Complete genome sequence of the mosquitocidal bacterium Bacillus sphaericus C3-41 and comparison with those of closely related Bacillus species.</title>
        <authorList>
            <person name="Hu X."/>
            <person name="Fan W."/>
            <person name="Han B."/>
            <person name="Liu H."/>
            <person name="Zheng D."/>
            <person name="Li Q."/>
            <person name="Dong W."/>
            <person name="Yan J."/>
            <person name="Gao M."/>
            <person name="Berry C."/>
            <person name="Yuan Z."/>
        </authorList>
    </citation>
    <scope>NUCLEOTIDE SEQUENCE [LARGE SCALE GENOMIC DNA]</scope>
    <source>
        <strain>C3-41</strain>
    </source>
</reference>
<organism>
    <name type="scientific">Lysinibacillus sphaericus (strain C3-41)</name>
    <dbReference type="NCBI Taxonomy" id="444177"/>
    <lineage>
        <taxon>Bacteria</taxon>
        <taxon>Bacillati</taxon>
        <taxon>Bacillota</taxon>
        <taxon>Bacilli</taxon>
        <taxon>Bacillales</taxon>
        <taxon>Bacillaceae</taxon>
        <taxon>Lysinibacillus</taxon>
    </lineage>
</organism>
<comment type="function">
    <text evidence="1">Catalyzes the thiamine diphosphate-dependent decarboxylation of 2-oxoglutarate and the subsequent addition of the resulting succinic semialdehyde-thiamine pyrophosphate anion to isochorismate to yield 2-succinyl-5-enolpyruvyl-6-hydroxy-3-cyclohexene-1-carboxylate (SEPHCHC).</text>
</comment>
<comment type="catalytic activity">
    <reaction evidence="1">
        <text>isochorismate + 2-oxoglutarate + H(+) = 5-enolpyruvoyl-6-hydroxy-2-succinyl-cyclohex-3-ene-1-carboxylate + CO2</text>
        <dbReference type="Rhea" id="RHEA:25593"/>
        <dbReference type="ChEBI" id="CHEBI:15378"/>
        <dbReference type="ChEBI" id="CHEBI:16526"/>
        <dbReference type="ChEBI" id="CHEBI:16810"/>
        <dbReference type="ChEBI" id="CHEBI:29780"/>
        <dbReference type="ChEBI" id="CHEBI:58818"/>
        <dbReference type="EC" id="2.2.1.9"/>
    </reaction>
</comment>
<comment type="cofactor">
    <cofactor evidence="1">
        <name>Mg(2+)</name>
        <dbReference type="ChEBI" id="CHEBI:18420"/>
    </cofactor>
    <cofactor evidence="1">
        <name>Mn(2+)</name>
        <dbReference type="ChEBI" id="CHEBI:29035"/>
    </cofactor>
</comment>
<comment type="cofactor">
    <cofactor evidence="1">
        <name>thiamine diphosphate</name>
        <dbReference type="ChEBI" id="CHEBI:58937"/>
    </cofactor>
    <text evidence="1">Binds 1 thiamine pyrophosphate per subunit.</text>
</comment>
<comment type="pathway">
    <text evidence="1">Quinol/quinone metabolism; 1,4-dihydroxy-2-naphthoate biosynthesis; 1,4-dihydroxy-2-naphthoate from chorismate: step 2/7.</text>
</comment>
<comment type="pathway">
    <text evidence="1">Quinol/quinone metabolism; menaquinone biosynthesis.</text>
</comment>
<comment type="subunit">
    <text evidence="1">Homodimer.</text>
</comment>
<comment type="similarity">
    <text evidence="1">Belongs to the TPP enzyme family. MenD subfamily.</text>
</comment>
<proteinExistence type="inferred from homology"/>
<name>MEND_LYSSC</name>
<dbReference type="EC" id="2.2.1.9" evidence="1"/>
<dbReference type="EMBL" id="CP000817">
    <property type="protein sequence ID" value="ACA41736.1"/>
    <property type="molecule type" value="Genomic_DNA"/>
</dbReference>
<dbReference type="RefSeq" id="WP_012295764.1">
    <property type="nucleotide sequence ID" value="NC_010382.1"/>
</dbReference>
<dbReference type="SMR" id="B1HY21"/>
<dbReference type="EnsemblBacteria" id="ACA41736">
    <property type="protein sequence ID" value="ACA41736"/>
    <property type="gene ID" value="Bsph_4277"/>
</dbReference>
<dbReference type="KEGG" id="lsp:Bsph_4277"/>
<dbReference type="HOGENOM" id="CLU_006051_3_0_9"/>
<dbReference type="UniPathway" id="UPA00079"/>
<dbReference type="UniPathway" id="UPA01057">
    <property type="reaction ID" value="UER00164"/>
</dbReference>
<dbReference type="Proteomes" id="UP000002164">
    <property type="component" value="Chromosome"/>
</dbReference>
<dbReference type="GO" id="GO:0070204">
    <property type="term" value="F:2-succinyl-5-enolpyruvyl-6-hydroxy-3-cyclohexene-1-carboxylic-acid synthase activity"/>
    <property type="evidence" value="ECO:0007669"/>
    <property type="project" value="UniProtKB-UniRule"/>
</dbReference>
<dbReference type="GO" id="GO:0000287">
    <property type="term" value="F:magnesium ion binding"/>
    <property type="evidence" value="ECO:0007669"/>
    <property type="project" value="UniProtKB-UniRule"/>
</dbReference>
<dbReference type="GO" id="GO:0030145">
    <property type="term" value="F:manganese ion binding"/>
    <property type="evidence" value="ECO:0007669"/>
    <property type="project" value="UniProtKB-UniRule"/>
</dbReference>
<dbReference type="GO" id="GO:0030976">
    <property type="term" value="F:thiamine pyrophosphate binding"/>
    <property type="evidence" value="ECO:0007669"/>
    <property type="project" value="UniProtKB-UniRule"/>
</dbReference>
<dbReference type="GO" id="GO:0009234">
    <property type="term" value="P:menaquinone biosynthetic process"/>
    <property type="evidence" value="ECO:0007669"/>
    <property type="project" value="UniProtKB-UniRule"/>
</dbReference>
<dbReference type="CDD" id="cd07037">
    <property type="entry name" value="TPP_PYR_MenD"/>
    <property type="match status" value="1"/>
</dbReference>
<dbReference type="CDD" id="cd02009">
    <property type="entry name" value="TPP_SHCHC_synthase"/>
    <property type="match status" value="1"/>
</dbReference>
<dbReference type="Gene3D" id="3.40.50.970">
    <property type="match status" value="2"/>
</dbReference>
<dbReference type="Gene3D" id="3.40.50.1220">
    <property type="entry name" value="TPP-binding domain"/>
    <property type="match status" value="1"/>
</dbReference>
<dbReference type="HAMAP" id="MF_01659">
    <property type="entry name" value="MenD"/>
    <property type="match status" value="1"/>
</dbReference>
<dbReference type="InterPro" id="IPR029035">
    <property type="entry name" value="DHS-like_NAD/FAD-binding_dom"/>
</dbReference>
<dbReference type="InterPro" id="IPR004433">
    <property type="entry name" value="MenaQ_synth_MenD"/>
</dbReference>
<dbReference type="InterPro" id="IPR032264">
    <property type="entry name" value="MenD_middle"/>
</dbReference>
<dbReference type="InterPro" id="IPR029061">
    <property type="entry name" value="THDP-binding"/>
</dbReference>
<dbReference type="InterPro" id="IPR012001">
    <property type="entry name" value="Thiamin_PyroP_enz_TPP-bd_dom"/>
</dbReference>
<dbReference type="InterPro" id="IPR011766">
    <property type="entry name" value="TPP_enzyme_TPP-bd"/>
</dbReference>
<dbReference type="NCBIfam" id="TIGR00173">
    <property type="entry name" value="menD"/>
    <property type="match status" value="1"/>
</dbReference>
<dbReference type="PANTHER" id="PTHR42916">
    <property type="entry name" value="2-SUCCINYL-5-ENOLPYRUVYL-6-HYDROXY-3-CYCLOHEXENE-1-CARBOXYLATE SYNTHASE"/>
    <property type="match status" value="1"/>
</dbReference>
<dbReference type="PANTHER" id="PTHR42916:SF1">
    <property type="entry name" value="PROTEIN PHYLLO, CHLOROPLASTIC"/>
    <property type="match status" value="1"/>
</dbReference>
<dbReference type="Pfam" id="PF02775">
    <property type="entry name" value="TPP_enzyme_C"/>
    <property type="match status" value="1"/>
</dbReference>
<dbReference type="Pfam" id="PF16582">
    <property type="entry name" value="TPP_enzyme_M_2"/>
    <property type="match status" value="1"/>
</dbReference>
<dbReference type="Pfam" id="PF02776">
    <property type="entry name" value="TPP_enzyme_N"/>
    <property type="match status" value="1"/>
</dbReference>
<dbReference type="PIRSF" id="PIRSF004983">
    <property type="entry name" value="MenD"/>
    <property type="match status" value="1"/>
</dbReference>
<dbReference type="SUPFAM" id="SSF52467">
    <property type="entry name" value="DHS-like NAD/FAD-binding domain"/>
    <property type="match status" value="1"/>
</dbReference>
<dbReference type="SUPFAM" id="SSF52518">
    <property type="entry name" value="Thiamin diphosphate-binding fold (THDP-binding)"/>
    <property type="match status" value="2"/>
</dbReference>
<keyword id="KW-0460">Magnesium</keyword>
<keyword id="KW-0464">Manganese</keyword>
<keyword id="KW-0474">Menaquinone biosynthesis</keyword>
<keyword id="KW-0479">Metal-binding</keyword>
<keyword id="KW-0786">Thiamine pyrophosphate</keyword>
<keyword id="KW-0808">Transferase</keyword>
<gene>
    <name evidence="1" type="primary">menD</name>
    <name type="ordered locus">Bsph_4277</name>
</gene>
<protein>
    <recommendedName>
        <fullName evidence="1">2-succinyl-5-enolpyruvyl-6-hydroxy-3-cyclohexene-1-carboxylate synthase</fullName>
        <shortName evidence="1">SEPHCHC synthase</shortName>
        <ecNumber evidence="1">2.2.1.9</ecNumber>
    </recommendedName>
    <alternativeName>
        <fullName evidence="1">Menaquinone biosynthesis protein MenD</fullName>
    </alternativeName>
</protein>
<evidence type="ECO:0000255" key="1">
    <source>
        <dbReference type="HAMAP-Rule" id="MF_01659"/>
    </source>
</evidence>